<name>CH60_SHEPC</name>
<reference key="1">
    <citation type="submission" date="2007-04" db="EMBL/GenBank/DDBJ databases">
        <title>Complete sequence of Shewanella putrefaciens CN-32.</title>
        <authorList>
            <consortium name="US DOE Joint Genome Institute"/>
            <person name="Copeland A."/>
            <person name="Lucas S."/>
            <person name="Lapidus A."/>
            <person name="Barry K."/>
            <person name="Detter J.C."/>
            <person name="Glavina del Rio T."/>
            <person name="Hammon N."/>
            <person name="Israni S."/>
            <person name="Dalin E."/>
            <person name="Tice H."/>
            <person name="Pitluck S."/>
            <person name="Chain P."/>
            <person name="Malfatti S."/>
            <person name="Shin M."/>
            <person name="Vergez L."/>
            <person name="Schmutz J."/>
            <person name="Larimer F."/>
            <person name="Land M."/>
            <person name="Hauser L."/>
            <person name="Kyrpides N."/>
            <person name="Mikhailova N."/>
            <person name="Romine M.F."/>
            <person name="Fredrickson J."/>
            <person name="Tiedje J."/>
            <person name="Richardson P."/>
        </authorList>
    </citation>
    <scope>NUCLEOTIDE SEQUENCE [LARGE SCALE GENOMIC DNA]</scope>
    <source>
        <strain>CN-32 / ATCC BAA-453</strain>
    </source>
</reference>
<accession>A4Y398</accession>
<dbReference type="EC" id="5.6.1.7" evidence="1"/>
<dbReference type="EMBL" id="CP000681">
    <property type="protein sequence ID" value="ABP74431.1"/>
    <property type="molecule type" value="Genomic_DNA"/>
</dbReference>
<dbReference type="SMR" id="A4Y398"/>
<dbReference type="STRING" id="319224.Sputcn32_0701"/>
<dbReference type="KEGG" id="spc:Sputcn32_0701"/>
<dbReference type="eggNOG" id="COG0459">
    <property type="taxonomic scope" value="Bacteria"/>
</dbReference>
<dbReference type="HOGENOM" id="CLU_016503_3_0_6"/>
<dbReference type="GO" id="GO:0005737">
    <property type="term" value="C:cytoplasm"/>
    <property type="evidence" value="ECO:0007669"/>
    <property type="project" value="UniProtKB-SubCell"/>
</dbReference>
<dbReference type="GO" id="GO:0005524">
    <property type="term" value="F:ATP binding"/>
    <property type="evidence" value="ECO:0007669"/>
    <property type="project" value="UniProtKB-UniRule"/>
</dbReference>
<dbReference type="GO" id="GO:0140662">
    <property type="term" value="F:ATP-dependent protein folding chaperone"/>
    <property type="evidence" value="ECO:0007669"/>
    <property type="project" value="InterPro"/>
</dbReference>
<dbReference type="GO" id="GO:0016853">
    <property type="term" value="F:isomerase activity"/>
    <property type="evidence" value="ECO:0007669"/>
    <property type="project" value="UniProtKB-KW"/>
</dbReference>
<dbReference type="GO" id="GO:0051082">
    <property type="term" value="F:unfolded protein binding"/>
    <property type="evidence" value="ECO:0007669"/>
    <property type="project" value="UniProtKB-UniRule"/>
</dbReference>
<dbReference type="GO" id="GO:0042026">
    <property type="term" value="P:protein refolding"/>
    <property type="evidence" value="ECO:0007669"/>
    <property type="project" value="UniProtKB-UniRule"/>
</dbReference>
<dbReference type="CDD" id="cd03344">
    <property type="entry name" value="GroEL"/>
    <property type="match status" value="1"/>
</dbReference>
<dbReference type="FunFam" id="1.10.560.10:FF:000001">
    <property type="entry name" value="60 kDa chaperonin"/>
    <property type="match status" value="1"/>
</dbReference>
<dbReference type="FunFam" id="3.50.7.10:FF:000001">
    <property type="entry name" value="60 kDa chaperonin"/>
    <property type="match status" value="1"/>
</dbReference>
<dbReference type="Gene3D" id="3.50.7.10">
    <property type="entry name" value="GroEL"/>
    <property type="match status" value="1"/>
</dbReference>
<dbReference type="Gene3D" id="1.10.560.10">
    <property type="entry name" value="GroEL-like equatorial domain"/>
    <property type="match status" value="1"/>
</dbReference>
<dbReference type="Gene3D" id="3.30.260.10">
    <property type="entry name" value="TCP-1-like chaperonin intermediate domain"/>
    <property type="match status" value="1"/>
</dbReference>
<dbReference type="HAMAP" id="MF_00600">
    <property type="entry name" value="CH60"/>
    <property type="match status" value="1"/>
</dbReference>
<dbReference type="InterPro" id="IPR018370">
    <property type="entry name" value="Chaperonin_Cpn60_CS"/>
</dbReference>
<dbReference type="InterPro" id="IPR001844">
    <property type="entry name" value="Cpn60/GroEL"/>
</dbReference>
<dbReference type="InterPro" id="IPR002423">
    <property type="entry name" value="Cpn60/GroEL/TCP-1"/>
</dbReference>
<dbReference type="InterPro" id="IPR027409">
    <property type="entry name" value="GroEL-like_apical_dom_sf"/>
</dbReference>
<dbReference type="InterPro" id="IPR027413">
    <property type="entry name" value="GROEL-like_equatorial_sf"/>
</dbReference>
<dbReference type="InterPro" id="IPR027410">
    <property type="entry name" value="TCP-1-like_intermed_sf"/>
</dbReference>
<dbReference type="NCBIfam" id="TIGR02348">
    <property type="entry name" value="GroEL"/>
    <property type="match status" value="1"/>
</dbReference>
<dbReference type="NCBIfam" id="NF000592">
    <property type="entry name" value="PRK00013.1"/>
    <property type="match status" value="1"/>
</dbReference>
<dbReference type="NCBIfam" id="NF009487">
    <property type="entry name" value="PRK12849.1"/>
    <property type="match status" value="1"/>
</dbReference>
<dbReference type="NCBIfam" id="NF009488">
    <property type="entry name" value="PRK12850.1"/>
    <property type="match status" value="1"/>
</dbReference>
<dbReference type="NCBIfam" id="NF009489">
    <property type="entry name" value="PRK12851.1"/>
    <property type="match status" value="1"/>
</dbReference>
<dbReference type="PANTHER" id="PTHR45633">
    <property type="entry name" value="60 KDA HEAT SHOCK PROTEIN, MITOCHONDRIAL"/>
    <property type="match status" value="1"/>
</dbReference>
<dbReference type="Pfam" id="PF00118">
    <property type="entry name" value="Cpn60_TCP1"/>
    <property type="match status" value="1"/>
</dbReference>
<dbReference type="PRINTS" id="PR00298">
    <property type="entry name" value="CHAPERONIN60"/>
</dbReference>
<dbReference type="SUPFAM" id="SSF52029">
    <property type="entry name" value="GroEL apical domain-like"/>
    <property type="match status" value="1"/>
</dbReference>
<dbReference type="SUPFAM" id="SSF48592">
    <property type="entry name" value="GroEL equatorial domain-like"/>
    <property type="match status" value="1"/>
</dbReference>
<dbReference type="SUPFAM" id="SSF54849">
    <property type="entry name" value="GroEL-intermediate domain like"/>
    <property type="match status" value="1"/>
</dbReference>
<dbReference type="PROSITE" id="PS00296">
    <property type="entry name" value="CHAPERONINS_CPN60"/>
    <property type="match status" value="1"/>
</dbReference>
<sequence>MAAKEVVFGNDARVKMLAGVNILANAVKVTLGPKGRNVVLDKSFGSPLITKDGVSVAKEIELEDKFENMGAQMVKEVASKANDAAGDGTTTATVLAQAIVTEGLKAVAAGMNPMDLKRGIDKAVIAAVAELKALSQPCADSKAIAQVATISANSDESIGEIIATAMEKVGKEGVITVEEGQALENELDVVEGMQFDRGYLSPYFINKPETGSVELDHPFVLLVDKKISNIRELLPILEGLAKTGKPLLIVAEDVEGEALATLVVNNMRGIVKVAAVKAPGFGDRRKAMLQDVAILTGGTVIAEEIGLELEKATLEDLGTAKRVVITKDNTTIIDGNGEQAQIEARVSQIKQQIEESTSDYDKEKLQERMAKLAGGVAVIKVGAATEVEMKEKKARVEDALHATRAAVEEGVVPGGGVALVRVASKIAELEVLNEDQKHGVVIALRAMEAPLRQIATNAGEEASVVANTVKNGSGNFGYNAGNDTYGDMLEMGILDPTKVTRCALQFAASIAGLMITTEAMVAEIPQNSAPDMGGMGGMGGMGGMM</sequence>
<protein>
    <recommendedName>
        <fullName evidence="1">Chaperonin GroEL</fullName>
        <ecNumber evidence="1">5.6.1.7</ecNumber>
    </recommendedName>
    <alternativeName>
        <fullName evidence="1">60 kDa chaperonin</fullName>
    </alternativeName>
    <alternativeName>
        <fullName evidence="1">Chaperonin-60</fullName>
        <shortName evidence="1">Cpn60</shortName>
    </alternativeName>
</protein>
<keyword id="KW-0067">ATP-binding</keyword>
<keyword id="KW-0143">Chaperone</keyword>
<keyword id="KW-0963">Cytoplasm</keyword>
<keyword id="KW-0413">Isomerase</keyword>
<keyword id="KW-0547">Nucleotide-binding</keyword>
<gene>
    <name evidence="1" type="primary">groEL</name>
    <name evidence="1" type="synonym">groL</name>
    <name type="ordered locus">Sputcn32_0701</name>
</gene>
<evidence type="ECO:0000255" key="1">
    <source>
        <dbReference type="HAMAP-Rule" id="MF_00600"/>
    </source>
</evidence>
<feature type="chain" id="PRO_0000332078" description="Chaperonin GroEL">
    <location>
        <begin position="1"/>
        <end position="545"/>
    </location>
</feature>
<feature type="binding site" evidence="1">
    <location>
        <begin position="30"/>
        <end position="33"/>
    </location>
    <ligand>
        <name>ATP</name>
        <dbReference type="ChEBI" id="CHEBI:30616"/>
    </ligand>
</feature>
<feature type="binding site" evidence="1">
    <location>
        <position position="51"/>
    </location>
    <ligand>
        <name>ATP</name>
        <dbReference type="ChEBI" id="CHEBI:30616"/>
    </ligand>
</feature>
<feature type="binding site" evidence="1">
    <location>
        <begin position="87"/>
        <end position="91"/>
    </location>
    <ligand>
        <name>ATP</name>
        <dbReference type="ChEBI" id="CHEBI:30616"/>
    </ligand>
</feature>
<feature type="binding site" evidence="1">
    <location>
        <position position="415"/>
    </location>
    <ligand>
        <name>ATP</name>
        <dbReference type="ChEBI" id="CHEBI:30616"/>
    </ligand>
</feature>
<feature type="binding site" evidence="1">
    <location>
        <position position="495"/>
    </location>
    <ligand>
        <name>ATP</name>
        <dbReference type="ChEBI" id="CHEBI:30616"/>
    </ligand>
</feature>
<proteinExistence type="inferred from homology"/>
<comment type="function">
    <text evidence="1">Together with its co-chaperonin GroES, plays an essential role in assisting protein folding. The GroEL-GroES system forms a nano-cage that allows encapsulation of the non-native substrate proteins and provides a physical environment optimized to promote and accelerate protein folding.</text>
</comment>
<comment type="catalytic activity">
    <reaction evidence="1">
        <text>ATP + H2O + a folded polypeptide = ADP + phosphate + an unfolded polypeptide.</text>
        <dbReference type="EC" id="5.6.1.7"/>
    </reaction>
</comment>
<comment type="subunit">
    <text evidence="1">Forms a cylinder of 14 subunits composed of two heptameric rings stacked back-to-back. Interacts with the co-chaperonin GroES.</text>
</comment>
<comment type="subcellular location">
    <subcellularLocation>
        <location evidence="1">Cytoplasm</location>
    </subcellularLocation>
</comment>
<comment type="similarity">
    <text evidence="1">Belongs to the chaperonin (HSP60) family.</text>
</comment>
<organism>
    <name type="scientific">Shewanella putrefaciens (strain CN-32 / ATCC BAA-453)</name>
    <dbReference type="NCBI Taxonomy" id="319224"/>
    <lineage>
        <taxon>Bacteria</taxon>
        <taxon>Pseudomonadati</taxon>
        <taxon>Pseudomonadota</taxon>
        <taxon>Gammaproteobacteria</taxon>
        <taxon>Alteromonadales</taxon>
        <taxon>Shewanellaceae</taxon>
        <taxon>Shewanella</taxon>
    </lineage>
</organism>